<sequence>MERALPAAGFLYWVGASTIAYLTLRASYSLFRAFQVWCVGNQAFVGPRLGEWAVVTGGTDGIGKSYAEELAKRGMKIVLISRSQDKLKEVSNNIKEKFNVETRTIAVDFSLDDIYDKIKTGLSGLEIGVLVNNVGMSYEYPEYFLEIPDLDNTIKKLININVLSICKVTRLVLPGMVERSKGVILNISSASGMLPVPLLTVYSATKAFVDFFSQCLHEEYKSKGIFVQSVLPFFVATKLAKIRKPTLDKPSAETFVKSAIKTVGLQTRTTGYVIHAIMGSINSILPRWIYFKTIMGFNKSLRNRYLKKTKKN</sequence>
<reference key="1">
    <citation type="submission" date="1996-12" db="EMBL/GenBank/DDBJ databases">
        <authorList>
            <person name="Trzyna W.C."/>
            <person name="Gabbeta V."/>
            <person name="McHugh K.M."/>
        </authorList>
    </citation>
    <scope>NUCLEOTIDE SEQUENCE [MRNA]</scope>
</reference>
<reference key="2">
    <citation type="journal article" date="2004" name="Genome Res.">
        <title>The status, quality, and expansion of the NIH full-length cDNA project: the Mammalian Gene Collection (MGC).</title>
        <authorList>
            <consortium name="The MGC Project Team"/>
        </authorList>
    </citation>
    <scope>NUCLEOTIDE SEQUENCE [LARGE SCALE MRNA]</scope>
    <source>
        <tissue>Pituitary anterior lobe</tissue>
    </source>
</reference>
<feature type="chain" id="PRO_0000248370" description="Very-long-chain 3-oxoacyl-CoA reductase">
    <location>
        <begin position="1"/>
        <end position="312"/>
    </location>
</feature>
<feature type="transmembrane region" description="Helical" evidence="3">
    <location>
        <begin position="4"/>
        <end position="24"/>
    </location>
</feature>
<feature type="transmembrane region" description="Helical" evidence="3">
    <location>
        <begin position="182"/>
        <end position="202"/>
    </location>
</feature>
<feature type="transmembrane region" description="Helical" evidence="3">
    <location>
        <begin position="271"/>
        <end position="291"/>
    </location>
</feature>
<feature type="short sequence motif" description="Di-lysine motif" evidence="1">
    <location>
        <begin position="308"/>
        <end position="312"/>
    </location>
</feature>
<feature type="active site" description="Proton acceptor" evidence="4">
    <location>
        <position position="202"/>
    </location>
</feature>
<feature type="binding site" evidence="1">
    <location>
        <begin position="50"/>
        <end position="79"/>
    </location>
    <ligand>
        <name>NADP(+)</name>
        <dbReference type="ChEBI" id="CHEBI:58349"/>
    </ligand>
</feature>
<feature type="binding site" evidence="1">
    <location>
        <position position="189"/>
    </location>
    <ligand>
        <name>substrate</name>
    </ligand>
</feature>
<feature type="sequence conflict" description="In Ref. 1; AAD00504." evidence="5" ref="1">
    <original>A</original>
    <variation>S</variation>
    <location>
        <position position="236"/>
    </location>
</feature>
<proteinExistence type="evidence at transcript level"/>
<evidence type="ECO:0000250" key="1"/>
<evidence type="ECO:0000250" key="2">
    <source>
        <dbReference type="UniProtKB" id="Q53GQ0"/>
    </source>
</evidence>
<evidence type="ECO:0000255" key="3"/>
<evidence type="ECO:0000255" key="4">
    <source>
        <dbReference type="PROSITE-ProRule" id="PRU10001"/>
    </source>
</evidence>
<evidence type="ECO:0000305" key="5"/>
<evidence type="ECO:0000312" key="6">
    <source>
        <dbReference type="RGD" id="708367"/>
    </source>
</evidence>
<keyword id="KW-0256">Endoplasmic reticulum</keyword>
<keyword id="KW-0444">Lipid biosynthesis</keyword>
<keyword id="KW-0443">Lipid metabolism</keyword>
<keyword id="KW-0472">Membrane</keyword>
<keyword id="KW-0521">NADP</keyword>
<keyword id="KW-0560">Oxidoreductase</keyword>
<keyword id="KW-1185">Reference proteome</keyword>
<keyword id="KW-0752">Steroid biosynthesis</keyword>
<keyword id="KW-0812">Transmembrane</keyword>
<keyword id="KW-1133">Transmembrane helix</keyword>
<dbReference type="EC" id="1.1.1.330" evidence="2"/>
<dbReference type="EC" id="1.1.1.62" evidence="2"/>
<dbReference type="EMBL" id="U81186">
    <property type="protein sequence ID" value="AAD00504.1"/>
    <property type="status" value="ALT_FRAME"/>
    <property type="molecule type" value="mRNA"/>
</dbReference>
<dbReference type="EMBL" id="BC061543">
    <property type="protein sequence ID" value="AAH61543.1"/>
    <property type="molecule type" value="mRNA"/>
</dbReference>
<dbReference type="RefSeq" id="NP_114455.2">
    <property type="nucleotide sequence ID" value="NM_032066.2"/>
</dbReference>
<dbReference type="RefSeq" id="XP_006234661.1">
    <property type="nucleotide sequence ID" value="XM_006234599.3"/>
</dbReference>
<dbReference type="SMR" id="Q6P7R8"/>
<dbReference type="BioGRID" id="249879">
    <property type="interactions" value="1"/>
</dbReference>
<dbReference type="FunCoup" id="Q6P7R8">
    <property type="interactions" value="2349"/>
</dbReference>
<dbReference type="STRING" id="10116.ENSRNOP00000012806"/>
<dbReference type="iPTMnet" id="Q6P7R8"/>
<dbReference type="PhosphoSitePlus" id="Q6P7R8"/>
<dbReference type="SwissPalm" id="Q6P7R8"/>
<dbReference type="jPOST" id="Q6P7R8"/>
<dbReference type="PaxDb" id="10116-ENSRNOP00000012806"/>
<dbReference type="Ensembl" id="ENSRNOT00000012806.8">
    <property type="protein sequence ID" value="ENSRNOP00000012806.4"/>
    <property type="gene ID" value="ENSRNOG00000009630.9"/>
</dbReference>
<dbReference type="GeneID" id="84013"/>
<dbReference type="KEGG" id="rno:84013"/>
<dbReference type="UCSC" id="RGD:708367">
    <property type="organism name" value="rat"/>
</dbReference>
<dbReference type="AGR" id="RGD:708367"/>
<dbReference type="CTD" id="51144"/>
<dbReference type="RGD" id="708367">
    <property type="gene designation" value="Hsd17b12"/>
</dbReference>
<dbReference type="eggNOG" id="KOG1014">
    <property type="taxonomic scope" value="Eukaryota"/>
</dbReference>
<dbReference type="GeneTree" id="ENSGT00940000154860"/>
<dbReference type="InParanoid" id="Q6P7R8"/>
<dbReference type="OMA" id="LVAPGMM"/>
<dbReference type="PhylomeDB" id="Q6P7R8"/>
<dbReference type="TreeFam" id="TF314591"/>
<dbReference type="Reactome" id="R-RNO-193048">
    <property type="pathway name" value="Androgen biosynthesis"/>
</dbReference>
<dbReference type="Reactome" id="R-RNO-75876">
    <property type="pathway name" value="Synthesis of very long-chain fatty acyl-CoAs"/>
</dbReference>
<dbReference type="UniPathway" id="UPA00094"/>
<dbReference type="UniPathway" id="UPA00769"/>
<dbReference type="PRO" id="PR:Q6P7R8"/>
<dbReference type="Proteomes" id="UP000002494">
    <property type="component" value="Chromosome 3"/>
</dbReference>
<dbReference type="Bgee" id="ENSRNOG00000009630">
    <property type="expression patterns" value="Expressed in liver and 20 other cell types or tissues"/>
</dbReference>
<dbReference type="ExpressionAtlas" id="Q6P7R8">
    <property type="expression patterns" value="baseline and differential"/>
</dbReference>
<dbReference type="GO" id="GO:0005783">
    <property type="term" value="C:endoplasmic reticulum"/>
    <property type="evidence" value="ECO:0000318"/>
    <property type="project" value="GO_Central"/>
</dbReference>
<dbReference type="GO" id="GO:0031012">
    <property type="term" value="C:extracellular matrix"/>
    <property type="evidence" value="ECO:0000266"/>
    <property type="project" value="RGD"/>
</dbReference>
<dbReference type="GO" id="GO:0009923">
    <property type="term" value="C:fatty acid elongase complex"/>
    <property type="evidence" value="ECO:0000266"/>
    <property type="project" value="RGD"/>
</dbReference>
<dbReference type="GO" id="GO:0005518">
    <property type="term" value="F:collagen binding"/>
    <property type="evidence" value="ECO:0000266"/>
    <property type="project" value="RGD"/>
</dbReference>
<dbReference type="GO" id="GO:0004303">
    <property type="term" value="F:estradiol 17-beta-dehydrogenase [NAD(P)+] activity"/>
    <property type="evidence" value="ECO:0007669"/>
    <property type="project" value="UniProtKB-EC"/>
</dbReference>
<dbReference type="GO" id="GO:0001968">
    <property type="term" value="F:fibronectin binding"/>
    <property type="evidence" value="ECO:0000266"/>
    <property type="project" value="RGD"/>
</dbReference>
<dbReference type="GO" id="GO:0008201">
    <property type="term" value="F:heparin binding"/>
    <property type="evidence" value="ECO:0000266"/>
    <property type="project" value="RGD"/>
</dbReference>
<dbReference type="GO" id="GO:0016491">
    <property type="term" value="F:oxidoreductase activity"/>
    <property type="evidence" value="ECO:0000318"/>
    <property type="project" value="GO_Central"/>
</dbReference>
<dbReference type="GO" id="GO:0141040">
    <property type="term" value="F:very-long-chain 3-oxoacyl-CoA reductase activity"/>
    <property type="evidence" value="ECO:0000266"/>
    <property type="project" value="RGD"/>
</dbReference>
<dbReference type="GO" id="GO:0006703">
    <property type="term" value="P:estrogen biosynthetic process"/>
    <property type="evidence" value="ECO:0007669"/>
    <property type="project" value="UniProtKB-UniPathway"/>
</dbReference>
<dbReference type="GO" id="GO:0030198">
    <property type="term" value="P:extracellular matrix organization"/>
    <property type="evidence" value="ECO:0000266"/>
    <property type="project" value="RGD"/>
</dbReference>
<dbReference type="GO" id="GO:0019367">
    <property type="term" value="P:fatty acid elongation, saturated fatty acid"/>
    <property type="evidence" value="ECO:0000266"/>
    <property type="project" value="RGD"/>
</dbReference>
<dbReference type="GO" id="GO:0010811">
    <property type="term" value="P:positive regulation of cell-substrate adhesion"/>
    <property type="evidence" value="ECO:0000266"/>
    <property type="project" value="RGD"/>
</dbReference>
<dbReference type="CDD" id="cd05356">
    <property type="entry name" value="17beta-HSD1_like_SDR_c"/>
    <property type="match status" value="1"/>
</dbReference>
<dbReference type="FunFam" id="3.40.50.720:FF:000137">
    <property type="entry name" value="Hydroxysteroid (17-beta) dehydrogenase 3"/>
    <property type="match status" value="1"/>
</dbReference>
<dbReference type="Gene3D" id="3.40.50.720">
    <property type="entry name" value="NAD(P)-binding Rossmann-like Domain"/>
    <property type="match status" value="1"/>
</dbReference>
<dbReference type="InterPro" id="IPR036291">
    <property type="entry name" value="NAD(P)-bd_dom_sf"/>
</dbReference>
<dbReference type="InterPro" id="IPR020904">
    <property type="entry name" value="Sc_DH/Rdtase_CS"/>
</dbReference>
<dbReference type="InterPro" id="IPR002347">
    <property type="entry name" value="SDR_fam"/>
</dbReference>
<dbReference type="InterPro" id="IPR051019">
    <property type="entry name" value="VLCFA-Steroid_DH"/>
</dbReference>
<dbReference type="PANTHER" id="PTHR43899">
    <property type="entry name" value="RH59310P"/>
    <property type="match status" value="1"/>
</dbReference>
<dbReference type="PANTHER" id="PTHR43899:SF14">
    <property type="entry name" value="VERY-LONG-CHAIN 3-OXOACYL-COA REDUCTASE"/>
    <property type="match status" value="1"/>
</dbReference>
<dbReference type="Pfam" id="PF00106">
    <property type="entry name" value="adh_short"/>
    <property type="match status" value="1"/>
</dbReference>
<dbReference type="PIRSF" id="PIRSF000126">
    <property type="entry name" value="11-beta-HSD1"/>
    <property type="match status" value="1"/>
</dbReference>
<dbReference type="PRINTS" id="PR00081">
    <property type="entry name" value="GDHRDH"/>
</dbReference>
<dbReference type="PRINTS" id="PR00080">
    <property type="entry name" value="SDRFAMILY"/>
</dbReference>
<dbReference type="SUPFAM" id="SSF51735">
    <property type="entry name" value="NAD(P)-binding Rossmann-fold domains"/>
    <property type="match status" value="1"/>
</dbReference>
<dbReference type="PROSITE" id="PS00061">
    <property type="entry name" value="ADH_SHORT"/>
    <property type="match status" value="1"/>
</dbReference>
<accession>Q6P7R8</accession>
<accession>Q9Z1B9</accession>
<organism>
    <name type="scientific">Rattus norvegicus</name>
    <name type="common">Rat</name>
    <dbReference type="NCBI Taxonomy" id="10116"/>
    <lineage>
        <taxon>Eukaryota</taxon>
        <taxon>Metazoa</taxon>
        <taxon>Chordata</taxon>
        <taxon>Craniata</taxon>
        <taxon>Vertebrata</taxon>
        <taxon>Euteleostomi</taxon>
        <taxon>Mammalia</taxon>
        <taxon>Eutheria</taxon>
        <taxon>Euarchontoglires</taxon>
        <taxon>Glires</taxon>
        <taxon>Rodentia</taxon>
        <taxon>Myomorpha</taxon>
        <taxon>Muroidea</taxon>
        <taxon>Muridae</taxon>
        <taxon>Murinae</taxon>
        <taxon>Rattus</taxon>
    </lineage>
</organism>
<comment type="function">
    <text evidence="2">Catalyzes the second of the four reactions of the long-chain fatty acids elongation cycle. This endoplasmic reticulum-bound enzymatic process, allows the addition of two carbons to the chain of long- and very long-chain fatty acids/VLCFAs per cycle. This enzyme has a 3-ketoacyl-CoA reductase activity, reducing 3-ketoacyl-CoA to 3-hydroxyacyl-CoA, within each cycle of fatty acid elongation. Thereby, it may participate in the production of VLCFAs of different chain lengths that are involved in multiple biological processes as precursors of membrane lipids and lipid mediators. May also catalyze the transformation of estrone (E1) into estradiol (E2) and play a role in estrogen formation.</text>
</comment>
<comment type="catalytic activity">
    <reaction evidence="2">
        <text>a very-long-chain (3R)-3-hydroxyacyl-CoA + NADP(+) = a very-long-chain 3-oxoacyl-CoA + NADPH + H(+)</text>
        <dbReference type="Rhea" id="RHEA:48680"/>
        <dbReference type="ChEBI" id="CHEBI:15378"/>
        <dbReference type="ChEBI" id="CHEBI:57783"/>
        <dbReference type="ChEBI" id="CHEBI:58349"/>
        <dbReference type="ChEBI" id="CHEBI:85440"/>
        <dbReference type="ChEBI" id="CHEBI:90725"/>
        <dbReference type="EC" id="1.1.1.330"/>
    </reaction>
</comment>
<comment type="catalytic activity">
    <reaction evidence="2">
        <text>17beta-estradiol + NAD(+) = estrone + NADH + H(+)</text>
        <dbReference type="Rhea" id="RHEA:24612"/>
        <dbReference type="ChEBI" id="CHEBI:15378"/>
        <dbReference type="ChEBI" id="CHEBI:16469"/>
        <dbReference type="ChEBI" id="CHEBI:17263"/>
        <dbReference type="ChEBI" id="CHEBI:57540"/>
        <dbReference type="ChEBI" id="CHEBI:57945"/>
        <dbReference type="EC" id="1.1.1.62"/>
    </reaction>
</comment>
<comment type="catalytic activity">
    <reaction evidence="2">
        <text>17beta-estradiol + NADP(+) = estrone + NADPH + H(+)</text>
        <dbReference type="Rhea" id="RHEA:24616"/>
        <dbReference type="ChEBI" id="CHEBI:15378"/>
        <dbReference type="ChEBI" id="CHEBI:16469"/>
        <dbReference type="ChEBI" id="CHEBI:17263"/>
        <dbReference type="ChEBI" id="CHEBI:57783"/>
        <dbReference type="ChEBI" id="CHEBI:58349"/>
        <dbReference type="EC" id="1.1.1.62"/>
    </reaction>
</comment>
<comment type="catalytic activity">
    <reaction evidence="2">
        <text>3-oxooctadecanoyl-CoA + NADPH + H(+) = (3R)-hydroxyoctadecanoyl-CoA + NADP(+)</text>
        <dbReference type="Rhea" id="RHEA:39151"/>
        <dbReference type="ChEBI" id="CHEBI:15378"/>
        <dbReference type="ChEBI" id="CHEBI:57783"/>
        <dbReference type="ChEBI" id="CHEBI:58349"/>
        <dbReference type="ChEBI" id="CHEBI:71407"/>
        <dbReference type="ChEBI" id="CHEBI:76374"/>
    </reaction>
</comment>
<comment type="catalytic activity">
    <reaction evidence="2">
        <text>(7Z,10Z,13Z,16Z)-3-oxodocosatetraenoyl-CoA + NADPH + H(+) = (3R)-hydroxy-(7Z,10Z,13Z,16Z)-docosatetraenoyl-CoA + NADP(+)</text>
        <dbReference type="Rhea" id="RHEA:39323"/>
        <dbReference type="ChEBI" id="CHEBI:15378"/>
        <dbReference type="ChEBI" id="CHEBI:57783"/>
        <dbReference type="ChEBI" id="CHEBI:58349"/>
        <dbReference type="ChEBI" id="CHEBI:73852"/>
        <dbReference type="ChEBI" id="CHEBI:76415"/>
    </reaction>
</comment>
<comment type="catalytic activity">
    <reaction evidence="2">
        <text>3-oxo-(7Z,10Z,13Z,16Z,19Z)-docosapentaenoyl-CoA + NADPH + H(+) = (3R)-hydroxy-(7Z,10Z,13Z,16Z,19Z)-docosapentaenoyl-CoA + NADP(+)</text>
        <dbReference type="Rhea" id="RHEA:39459"/>
        <dbReference type="ChEBI" id="CHEBI:15378"/>
        <dbReference type="ChEBI" id="CHEBI:57783"/>
        <dbReference type="ChEBI" id="CHEBI:58349"/>
        <dbReference type="ChEBI" id="CHEBI:73863"/>
        <dbReference type="ChEBI" id="CHEBI:76460"/>
    </reaction>
</comment>
<comment type="catalytic activity">
    <reaction evidence="2">
        <text>(8Z,11Z,14Z)-3-oxoeicosatrienoyl-CoA + NADPH + H(+) = (3R)-hydroxy-(8Z,11Z,14Z)-eicosatrienoyl-CoA + NADP(+)</text>
        <dbReference type="Rhea" id="RHEA:39311"/>
        <dbReference type="ChEBI" id="CHEBI:15378"/>
        <dbReference type="ChEBI" id="CHEBI:57783"/>
        <dbReference type="ChEBI" id="CHEBI:58349"/>
        <dbReference type="ChEBI" id="CHEBI:71481"/>
        <dbReference type="ChEBI" id="CHEBI:76411"/>
    </reaction>
</comment>
<comment type="pathway">
    <text evidence="2">Lipid metabolism; fatty acid biosynthesis.</text>
</comment>
<comment type="pathway">
    <text evidence="2">Steroid biosynthesis; estrogen biosynthesis.</text>
</comment>
<comment type="subcellular location">
    <subcellularLocation>
        <location evidence="2">Endoplasmic reticulum membrane</location>
        <topology evidence="2">Multi-pass membrane protein</topology>
    </subcellularLocation>
</comment>
<comment type="domain">
    <text evidence="1">The di-lysine motif confers endoplasmic reticulum localization for type I membrane proteins.</text>
</comment>
<comment type="similarity">
    <text evidence="5">Belongs to the short-chain dehydrogenases/reductases (SDR) family. 17-beta-HSD 3 subfamily.</text>
</comment>
<comment type="sequence caution" evidence="5">
    <conflict type="frameshift">
        <sequence resource="EMBL-CDS" id="AAD00504"/>
    </conflict>
</comment>
<gene>
    <name evidence="6" type="primary">Hsd17b12</name>
</gene>
<protein>
    <recommendedName>
        <fullName evidence="5">Very-long-chain 3-oxoacyl-CoA reductase</fullName>
        <ecNumber evidence="2">1.1.1.330</ecNumber>
    </recommendedName>
    <alternativeName>
        <fullName evidence="2">17-beta-hydroxysteroid dehydrogenase 12</fullName>
        <shortName evidence="2">17-beta-HSD 12</shortName>
    </alternativeName>
    <alternativeName>
        <fullName evidence="2">3-ketoacyl-CoA reductase</fullName>
        <shortName evidence="2">KAR</shortName>
    </alternativeName>
    <alternativeName>
        <fullName evidence="2">Estradiol 17-beta-dehydrogenase 12</fullName>
        <ecNumber evidence="2">1.1.1.62</ecNumber>
    </alternativeName>
</protein>
<name>DHB12_RAT</name>